<sequence length="157" mass="17427">MRVVIQRVKASRVEVDGEVIGTIGRGLNLLVGISRTDTIAEVEWMVRKCLDLRLFPDEKGSLALSVQEMGAELLVVSQFTLYGDGRKGRRPSFDRAAGGEQAQTLYDRFVAGLRQSGLRVETGQFGAMMEVFILNDGPVTLLLEREAPLEQEDNRDD</sequence>
<gene>
    <name evidence="1" type="primary">dtd</name>
    <name type="ordered locus">Cyan7425_0623</name>
</gene>
<reference key="1">
    <citation type="journal article" date="2011" name="MBio">
        <title>Novel metabolic attributes of the genus Cyanothece, comprising a group of unicellular nitrogen-fixing Cyanobacteria.</title>
        <authorList>
            <person name="Bandyopadhyay A."/>
            <person name="Elvitigala T."/>
            <person name="Welsh E."/>
            <person name="Stockel J."/>
            <person name="Liberton M."/>
            <person name="Min H."/>
            <person name="Sherman L.A."/>
            <person name="Pakrasi H.B."/>
        </authorList>
    </citation>
    <scope>NUCLEOTIDE SEQUENCE [LARGE SCALE GENOMIC DNA]</scope>
    <source>
        <strain>PCC 7425 / ATCC 29141</strain>
    </source>
</reference>
<proteinExistence type="inferred from homology"/>
<dbReference type="EC" id="3.1.1.96" evidence="1"/>
<dbReference type="EMBL" id="CP001344">
    <property type="protein sequence ID" value="ACL43012.1"/>
    <property type="molecule type" value="Genomic_DNA"/>
</dbReference>
<dbReference type="SMR" id="B8HUW5"/>
<dbReference type="STRING" id="395961.Cyan7425_0623"/>
<dbReference type="KEGG" id="cyn:Cyan7425_0623"/>
<dbReference type="eggNOG" id="COG1490">
    <property type="taxonomic scope" value="Bacteria"/>
</dbReference>
<dbReference type="HOGENOM" id="CLU_076901_1_0_3"/>
<dbReference type="OrthoDB" id="9801395at2"/>
<dbReference type="GO" id="GO:0005737">
    <property type="term" value="C:cytoplasm"/>
    <property type="evidence" value="ECO:0007669"/>
    <property type="project" value="UniProtKB-SubCell"/>
</dbReference>
<dbReference type="GO" id="GO:0051500">
    <property type="term" value="F:D-tyrosyl-tRNA(Tyr) deacylase activity"/>
    <property type="evidence" value="ECO:0007669"/>
    <property type="project" value="TreeGrafter"/>
</dbReference>
<dbReference type="GO" id="GO:0106026">
    <property type="term" value="F:Gly-tRNA(Ala) deacylase activity"/>
    <property type="evidence" value="ECO:0007669"/>
    <property type="project" value="UniProtKB-UniRule"/>
</dbReference>
<dbReference type="GO" id="GO:0043908">
    <property type="term" value="F:Ser(Gly)-tRNA(Ala) hydrolase activity"/>
    <property type="evidence" value="ECO:0007669"/>
    <property type="project" value="UniProtKB-UniRule"/>
</dbReference>
<dbReference type="GO" id="GO:0000049">
    <property type="term" value="F:tRNA binding"/>
    <property type="evidence" value="ECO:0007669"/>
    <property type="project" value="UniProtKB-UniRule"/>
</dbReference>
<dbReference type="GO" id="GO:0019478">
    <property type="term" value="P:D-amino acid catabolic process"/>
    <property type="evidence" value="ECO:0007669"/>
    <property type="project" value="UniProtKB-UniRule"/>
</dbReference>
<dbReference type="CDD" id="cd00563">
    <property type="entry name" value="Dtyr_deacylase"/>
    <property type="match status" value="1"/>
</dbReference>
<dbReference type="FunFam" id="3.50.80.10:FF:000001">
    <property type="entry name" value="D-aminoacyl-tRNA deacylase"/>
    <property type="match status" value="1"/>
</dbReference>
<dbReference type="Gene3D" id="3.50.80.10">
    <property type="entry name" value="D-tyrosyl-tRNA(Tyr) deacylase"/>
    <property type="match status" value="1"/>
</dbReference>
<dbReference type="HAMAP" id="MF_00518">
    <property type="entry name" value="Deacylase_Dtd"/>
    <property type="match status" value="1"/>
</dbReference>
<dbReference type="InterPro" id="IPR003732">
    <property type="entry name" value="Daa-tRNA_deacyls_DTD"/>
</dbReference>
<dbReference type="InterPro" id="IPR023509">
    <property type="entry name" value="DTD-like_sf"/>
</dbReference>
<dbReference type="NCBIfam" id="TIGR00256">
    <property type="entry name" value="D-aminoacyl-tRNA deacylase"/>
    <property type="match status" value="1"/>
</dbReference>
<dbReference type="PANTHER" id="PTHR10472:SF5">
    <property type="entry name" value="D-AMINOACYL-TRNA DEACYLASE 1"/>
    <property type="match status" value="1"/>
</dbReference>
<dbReference type="PANTHER" id="PTHR10472">
    <property type="entry name" value="D-TYROSYL-TRNA TYR DEACYLASE"/>
    <property type="match status" value="1"/>
</dbReference>
<dbReference type="Pfam" id="PF02580">
    <property type="entry name" value="Tyr_Deacylase"/>
    <property type="match status" value="1"/>
</dbReference>
<dbReference type="SUPFAM" id="SSF69500">
    <property type="entry name" value="DTD-like"/>
    <property type="match status" value="1"/>
</dbReference>
<comment type="function">
    <text evidence="1">An aminoacyl-tRNA editing enzyme that deacylates mischarged D-aminoacyl-tRNAs. Also deacylates mischarged glycyl-tRNA(Ala), protecting cells against glycine mischarging by AlaRS. Acts via tRNA-based rather than protein-based catalysis; rejects L-amino acids rather than detecting D-amino acids in the active site. By recycling D-aminoacyl-tRNA to D-amino acids and free tRNA molecules, this enzyme counteracts the toxicity associated with the formation of D-aminoacyl-tRNA entities in vivo and helps enforce protein L-homochirality.</text>
</comment>
<comment type="catalytic activity">
    <reaction evidence="1">
        <text>glycyl-tRNA(Ala) + H2O = tRNA(Ala) + glycine + H(+)</text>
        <dbReference type="Rhea" id="RHEA:53744"/>
        <dbReference type="Rhea" id="RHEA-COMP:9657"/>
        <dbReference type="Rhea" id="RHEA-COMP:13640"/>
        <dbReference type="ChEBI" id="CHEBI:15377"/>
        <dbReference type="ChEBI" id="CHEBI:15378"/>
        <dbReference type="ChEBI" id="CHEBI:57305"/>
        <dbReference type="ChEBI" id="CHEBI:78442"/>
        <dbReference type="ChEBI" id="CHEBI:78522"/>
        <dbReference type="EC" id="3.1.1.96"/>
    </reaction>
</comment>
<comment type="catalytic activity">
    <reaction evidence="1">
        <text>a D-aminoacyl-tRNA + H2O = a tRNA + a D-alpha-amino acid + H(+)</text>
        <dbReference type="Rhea" id="RHEA:13953"/>
        <dbReference type="Rhea" id="RHEA-COMP:10123"/>
        <dbReference type="Rhea" id="RHEA-COMP:10124"/>
        <dbReference type="ChEBI" id="CHEBI:15377"/>
        <dbReference type="ChEBI" id="CHEBI:15378"/>
        <dbReference type="ChEBI" id="CHEBI:59871"/>
        <dbReference type="ChEBI" id="CHEBI:78442"/>
        <dbReference type="ChEBI" id="CHEBI:79333"/>
        <dbReference type="EC" id="3.1.1.96"/>
    </reaction>
</comment>
<comment type="subunit">
    <text evidence="1">Homodimer.</text>
</comment>
<comment type="subcellular location">
    <subcellularLocation>
        <location evidence="1">Cytoplasm</location>
    </subcellularLocation>
</comment>
<comment type="domain">
    <text evidence="1">A Gly-cisPro motif from one monomer fits into the active site of the other monomer to allow specific chiral rejection of L-amino acids.</text>
</comment>
<comment type="similarity">
    <text evidence="1">Belongs to the DTD family.</text>
</comment>
<keyword id="KW-0963">Cytoplasm</keyword>
<keyword id="KW-0378">Hydrolase</keyword>
<keyword id="KW-0694">RNA-binding</keyword>
<keyword id="KW-0820">tRNA-binding</keyword>
<protein>
    <recommendedName>
        <fullName evidence="1">D-aminoacyl-tRNA deacylase</fullName>
        <shortName evidence="1">DTD</shortName>
        <ecNumber evidence="1">3.1.1.96</ecNumber>
    </recommendedName>
    <alternativeName>
        <fullName evidence="1">Gly-tRNA(Ala) deacylase</fullName>
    </alternativeName>
</protein>
<name>DTD_CYAP4</name>
<organism>
    <name type="scientific">Cyanothece sp. (strain PCC 7425 / ATCC 29141)</name>
    <dbReference type="NCBI Taxonomy" id="395961"/>
    <lineage>
        <taxon>Bacteria</taxon>
        <taxon>Bacillati</taxon>
        <taxon>Cyanobacteriota</taxon>
        <taxon>Cyanophyceae</taxon>
        <taxon>Gomontiellales</taxon>
        <taxon>Cyanothecaceae</taxon>
        <taxon>Cyanothece</taxon>
    </lineage>
</organism>
<feature type="chain" id="PRO_1000146191" description="D-aminoacyl-tRNA deacylase">
    <location>
        <begin position="1"/>
        <end position="157"/>
    </location>
</feature>
<feature type="short sequence motif" description="Gly-cisPro motif, important for rejection of L-amino acids" evidence="1">
    <location>
        <begin position="137"/>
        <end position="138"/>
    </location>
</feature>
<evidence type="ECO:0000255" key="1">
    <source>
        <dbReference type="HAMAP-Rule" id="MF_00518"/>
    </source>
</evidence>
<accession>B8HUW5</accession>